<proteinExistence type="evidence at transcript level"/>
<name>DHN3_HORVU</name>
<protein>
    <recommendedName>
        <fullName>Dehydrin DHN3</fullName>
    </recommendedName>
    <alternativeName>
        <fullName>B17</fullName>
    </alternativeName>
</protein>
<gene>
    <name type="primary">DHN3</name>
</gene>
<feature type="chain" id="PRO_0000100048" description="Dehydrin DHN3">
    <location>
        <begin position="1"/>
        <end position="161"/>
    </location>
</feature>
<feature type="repeat" description="1">
    <location>
        <begin position="101"/>
        <end position="123"/>
    </location>
</feature>
<feature type="repeat" description="2">
    <location>
        <begin position="124"/>
        <end position="144"/>
    </location>
</feature>
<feature type="region of interest" description="Disordered" evidence="1">
    <location>
        <begin position="1"/>
        <end position="161"/>
    </location>
</feature>
<feature type="region of interest" description="2 X approximate tandem repeats">
    <location>
        <begin position="101"/>
        <end position="144"/>
    </location>
</feature>
<feature type="compositionally biased region" description="Basic and acidic residues" evidence="1">
    <location>
        <begin position="1"/>
        <end position="12"/>
    </location>
</feature>
<feature type="compositionally biased region" description="Gly residues" evidence="1">
    <location>
        <begin position="20"/>
        <end position="38"/>
    </location>
</feature>
<feature type="compositionally biased region" description="Low complexity" evidence="1">
    <location>
        <begin position="93"/>
        <end position="107"/>
    </location>
</feature>
<feature type="compositionally biased region" description="Low complexity" evidence="1">
    <location>
        <begin position="115"/>
        <end position="130"/>
    </location>
</feature>
<feature type="compositionally biased region" description="Gly residues" evidence="1">
    <location>
        <begin position="131"/>
        <end position="142"/>
    </location>
</feature>
<feature type="compositionally biased region" description="Basic and acidic residues" evidence="1">
    <location>
        <begin position="143"/>
        <end position="161"/>
    </location>
</feature>
<keyword id="KW-0677">Repeat</keyword>
<keyword id="KW-0346">Stress response</keyword>
<sequence>MEHGHATNRVDEYGNPVAGHGVGTGMGAHGGVGTGAAAGGHFQPTREEHKAGGILQRSGSSSSSSSEDDGMGGRRKKGLKDKIKEKLPGGHGDQQQTGGTYGQHGHTGMTGTGEHGATATGGTYGQQGHTGMTGTGAHGTDGTGEKKGIMDKIKEKLPGQH</sequence>
<evidence type="ECO:0000256" key="1">
    <source>
        <dbReference type="SAM" id="MobiDB-lite"/>
    </source>
</evidence>
<evidence type="ECO:0000305" key="2"/>
<comment type="induction">
    <text>By abscisic acid (ABA) and water stress.</text>
</comment>
<comment type="similarity">
    <text evidence="2">Belongs to the plant dehydrin family.</text>
</comment>
<reference key="1">
    <citation type="journal article" date="1989" name="Plant Mol. Biol.">
        <title>A cDNA-based comparison of dehydration-induced proteins (dehydrins) in barley and corn.</title>
        <authorList>
            <person name="Close T.J."/>
            <person name="Kortt A.A."/>
            <person name="Chandler P.M."/>
        </authorList>
    </citation>
    <scope>NUCLEOTIDE SEQUENCE [MRNA]</scope>
    <source>
        <strain>cv. Himalaya</strain>
        <tissue>Seedling</tissue>
    </source>
</reference>
<organism>
    <name type="scientific">Hordeum vulgare</name>
    <name type="common">Barley</name>
    <dbReference type="NCBI Taxonomy" id="4513"/>
    <lineage>
        <taxon>Eukaryota</taxon>
        <taxon>Viridiplantae</taxon>
        <taxon>Streptophyta</taxon>
        <taxon>Embryophyta</taxon>
        <taxon>Tracheophyta</taxon>
        <taxon>Spermatophyta</taxon>
        <taxon>Magnoliopsida</taxon>
        <taxon>Liliopsida</taxon>
        <taxon>Poales</taxon>
        <taxon>Poaceae</taxon>
        <taxon>BOP clade</taxon>
        <taxon>Pooideae</taxon>
        <taxon>Triticodae</taxon>
        <taxon>Triticeae</taxon>
        <taxon>Hordeinae</taxon>
        <taxon>Hordeum</taxon>
    </lineage>
</organism>
<dbReference type="EMBL" id="X15286">
    <property type="protein sequence ID" value="CAA33360.1"/>
    <property type="molecule type" value="mRNA"/>
</dbReference>
<dbReference type="PIR" id="S05547">
    <property type="entry name" value="S05547"/>
</dbReference>
<dbReference type="ExpressionAtlas" id="P12948">
    <property type="expression patterns" value="baseline and differential"/>
</dbReference>
<dbReference type="GO" id="GO:0005829">
    <property type="term" value="C:cytosol"/>
    <property type="evidence" value="ECO:0007669"/>
    <property type="project" value="TreeGrafter"/>
</dbReference>
<dbReference type="GO" id="GO:0009631">
    <property type="term" value="P:cold acclimation"/>
    <property type="evidence" value="ECO:0007669"/>
    <property type="project" value="TreeGrafter"/>
</dbReference>
<dbReference type="GO" id="GO:0009737">
    <property type="term" value="P:response to abscisic acid"/>
    <property type="evidence" value="ECO:0007669"/>
    <property type="project" value="TreeGrafter"/>
</dbReference>
<dbReference type="GO" id="GO:0009414">
    <property type="term" value="P:response to water deprivation"/>
    <property type="evidence" value="ECO:0007669"/>
    <property type="project" value="TreeGrafter"/>
</dbReference>
<dbReference type="InterPro" id="IPR000167">
    <property type="entry name" value="Dehydrin"/>
</dbReference>
<dbReference type="InterPro" id="IPR030513">
    <property type="entry name" value="Dehydrin_CS"/>
</dbReference>
<dbReference type="PANTHER" id="PTHR33346:SF52">
    <property type="entry name" value="DEHYDRIN"/>
    <property type="match status" value="1"/>
</dbReference>
<dbReference type="PANTHER" id="PTHR33346">
    <property type="entry name" value="DEHYDRIN XERO 2-RELATED"/>
    <property type="match status" value="1"/>
</dbReference>
<dbReference type="Pfam" id="PF00257">
    <property type="entry name" value="Dehydrin"/>
    <property type="match status" value="1"/>
</dbReference>
<dbReference type="PROSITE" id="PS00315">
    <property type="entry name" value="DEHYDRIN_1"/>
    <property type="match status" value="1"/>
</dbReference>
<dbReference type="PROSITE" id="PS00823">
    <property type="entry name" value="DEHYDRIN_2"/>
    <property type="match status" value="2"/>
</dbReference>
<accession>P12948</accession>